<gene>
    <name evidence="1" type="primary">rsmG</name>
    <name type="ordered locus">Avi_4387</name>
</gene>
<dbReference type="EC" id="2.1.1.170" evidence="1"/>
<dbReference type="EMBL" id="CP000633">
    <property type="protein sequence ID" value="ACM38189.1"/>
    <property type="molecule type" value="Genomic_DNA"/>
</dbReference>
<dbReference type="RefSeq" id="WP_015917599.1">
    <property type="nucleotide sequence ID" value="NC_011989.1"/>
</dbReference>
<dbReference type="SMR" id="B9JV51"/>
<dbReference type="STRING" id="311402.Avi_4387"/>
<dbReference type="KEGG" id="avi:Avi_4387"/>
<dbReference type="eggNOG" id="COG0357">
    <property type="taxonomic scope" value="Bacteria"/>
</dbReference>
<dbReference type="HOGENOM" id="CLU_065341_1_1_5"/>
<dbReference type="Proteomes" id="UP000001596">
    <property type="component" value="Chromosome 1"/>
</dbReference>
<dbReference type="GO" id="GO:0005829">
    <property type="term" value="C:cytosol"/>
    <property type="evidence" value="ECO:0007669"/>
    <property type="project" value="TreeGrafter"/>
</dbReference>
<dbReference type="GO" id="GO:0070043">
    <property type="term" value="F:rRNA (guanine-N7-)-methyltransferase activity"/>
    <property type="evidence" value="ECO:0007669"/>
    <property type="project" value="UniProtKB-UniRule"/>
</dbReference>
<dbReference type="Gene3D" id="3.40.50.150">
    <property type="entry name" value="Vaccinia Virus protein VP39"/>
    <property type="match status" value="1"/>
</dbReference>
<dbReference type="HAMAP" id="MF_00074">
    <property type="entry name" value="16SrRNA_methyltr_G"/>
    <property type="match status" value="1"/>
</dbReference>
<dbReference type="InterPro" id="IPR003682">
    <property type="entry name" value="rRNA_ssu_MeTfrase_G"/>
</dbReference>
<dbReference type="InterPro" id="IPR029063">
    <property type="entry name" value="SAM-dependent_MTases_sf"/>
</dbReference>
<dbReference type="NCBIfam" id="TIGR00138">
    <property type="entry name" value="rsmG_gidB"/>
    <property type="match status" value="1"/>
</dbReference>
<dbReference type="PANTHER" id="PTHR31760">
    <property type="entry name" value="S-ADENOSYL-L-METHIONINE-DEPENDENT METHYLTRANSFERASES SUPERFAMILY PROTEIN"/>
    <property type="match status" value="1"/>
</dbReference>
<dbReference type="PANTHER" id="PTHR31760:SF0">
    <property type="entry name" value="S-ADENOSYL-L-METHIONINE-DEPENDENT METHYLTRANSFERASES SUPERFAMILY PROTEIN"/>
    <property type="match status" value="1"/>
</dbReference>
<dbReference type="Pfam" id="PF02527">
    <property type="entry name" value="GidB"/>
    <property type="match status" value="1"/>
</dbReference>
<dbReference type="PIRSF" id="PIRSF003078">
    <property type="entry name" value="GidB"/>
    <property type="match status" value="1"/>
</dbReference>
<dbReference type="SUPFAM" id="SSF53335">
    <property type="entry name" value="S-adenosyl-L-methionine-dependent methyltransferases"/>
    <property type="match status" value="1"/>
</dbReference>
<proteinExistence type="inferred from homology"/>
<name>RSMG_ALLAM</name>
<comment type="function">
    <text evidence="1">Specifically methylates the N7 position of guanine in position 527 of 16S rRNA.</text>
</comment>
<comment type="catalytic activity">
    <reaction evidence="1">
        <text>guanosine(527) in 16S rRNA + S-adenosyl-L-methionine = N(7)-methylguanosine(527) in 16S rRNA + S-adenosyl-L-homocysteine</text>
        <dbReference type="Rhea" id="RHEA:42732"/>
        <dbReference type="Rhea" id="RHEA-COMP:10209"/>
        <dbReference type="Rhea" id="RHEA-COMP:10210"/>
        <dbReference type="ChEBI" id="CHEBI:57856"/>
        <dbReference type="ChEBI" id="CHEBI:59789"/>
        <dbReference type="ChEBI" id="CHEBI:74269"/>
        <dbReference type="ChEBI" id="CHEBI:74480"/>
        <dbReference type="EC" id="2.1.1.170"/>
    </reaction>
</comment>
<comment type="subcellular location">
    <subcellularLocation>
        <location evidence="1">Cytoplasm</location>
    </subcellularLocation>
</comment>
<comment type="similarity">
    <text evidence="1">Belongs to the methyltransferase superfamily. RNA methyltransferase RsmG family.</text>
</comment>
<sequence length="211" mass="23794">MSASLFQRLTGLRVSRETYEKLDHFVDLFGKWSKVINLVANSTKDQIWHRHVIDSAQLFKLRPNPQHWIDLGSGGGFPGVITAILLSEKSDGWVDLVESNNKKAAFLRTALMETGARGRVHPVRIEEAHKSLSDCDTISARALADLDLLFSYASPWAEKNKNLNFLLHKGRDYQSEVNNARDRWTFDLIIHPSVLEADSVILEVSGLARSK</sequence>
<organism>
    <name type="scientific">Allorhizobium ampelinum (strain ATCC BAA-846 / DSM 112012 / S4)</name>
    <name type="common">Agrobacterium vitis (strain S4)</name>
    <dbReference type="NCBI Taxonomy" id="311402"/>
    <lineage>
        <taxon>Bacteria</taxon>
        <taxon>Pseudomonadati</taxon>
        <taxon>Pseudomonadota</taxon>
        <taxon>Alphaproteobacteria</taxon>
        <taxon>Hyphomicrobiales</taxon>
        <taxon>Rhizobiaceae</taxon>
        <taxon>Rhizobium/Agrobacterium group</taxon>
        <taxon>Allorhizobium</taxon>
        <taxon>Allorhizobium ampelinum</taxon>
    </lineage>
</organism>
<keyword id="KW-0963">Cytoplasm</keyword>
<keyword id="KW-0489">Methyltransferase</keyword>
<keyword id="KW-1185">Reference proteome</keyword>
<keyword id="KW-0698">rRNA processing</keyword>
<keyword id="KW-0949">S-adenosyl-L-methionine</keyword>
<keyword id="KW-0808">Transferase</keyword>
<evidence type="ECO:0000255" key="1">
    <source>
        <dbReference type="HAMAP-Rule" id="MF_00074"/>
    </source>
</evidence>
<accession>B9JV51</accession>
<reference key="1">
    <citation type="journal article" date="2009" name="J. Bacteriol.">
        <title>Genome sequences of three Agrobacterium biovars help elucidate the evolution of multichromosome genomes in bacteria.</title>
        <authorList>
            <person name="Slater S.C."/>
            <person name="Goldman B.S."/>
            <person name="Goodner B."/>
            <person name="Setubal J.C."/>
            <person name="Farrand S.K."/>
            <person name="Nester E.W."/>
            <person name="Burr T.J."/>
            <person name="Banta L."/>
            <person name="Dickerman A.W."/>
            <person name="Paulsen I."/>
            <person name="Otten L."/>
            <person name="Suen G."/>
            <person name="Welch R."/>
            <person name="Almeida N.F."/>
            <person name="Arnold F."/>
            <person name="Burton O.T."/>
            <person name="Du Z."/>
            <person name="Ewing A."/>
            <person name="Godsy E."/>
            <person name="Heisel S."/>
            <person name="Houmiel K.L."/>
            <person name="Jhaveri J."/>
            <person name="Lu J."/>
            <person name="Miller N.M."/>
            <person name="Norton S."/>
            <person name="Chen Q."/>
            <person name="Phoolcharoen W."/>
            <person name="Ohlin V."/>
            <person name="Ondrusek D."/>
            <person name="Pride N."/>
            <person name="Stricklin S.L."/>
            <person name="Sun J."/>
            <person name="Wheeler C."/>
            <person name="Wilson L."/>
            <person name="Zhu H."/>
            <person name="Wood D.W."/>
        </authorList>
    </citation>
    <scope>NUCLEOTIDE SEQUENCE [LARGE SCALE GENOMIC DNA]</scope>
    <source>
        <strain>ATCC BAA-846 / DSM 112012 / S4</strain>
    </source>
</reference>
<feature type="chain" id="PRO_1000118168" description="Ribosomal RNA small subunit methyltransferase G">
    <location>
        <begin position="1"/>
        <end position="211"/>
    </location>
</feature>
<feature type="binding site" evidence="1">
    <location>
        <position position="72"/>
    </location>
    <ligand>
        <name>S-adenosyl-L-methionine</name>
        <dbReference type="ChEBI" id="CHEBI:59789"/>
    </ligand>
</feature>
<feature type="binding site" evidence="1">
    <location>
        <position position="77"/>
    </location>
    <ligand>
        <name>S-adenosyl-L-methionine</name>
        <dbReference type="ChEBI" id="CHEBI:59789"/>
    </ligand>
</feature>
<feature type="binding site" evidence="1">
    <location>
        <begin position="125"/>
        <end position="126"/>
    </location>
    <ligand>
        <name>S-adenosyl-L-methionine</name>
        <dbReference type="ChEBI" id="CHEBI:59789"/>
    </ligand>
</feature>
<feature type="binding site" evidence="1">
    <location>
        <position position="141"/>
    </location>
    <ligand>
        <name>S-adenosyl-L-methionine</name>
        <dbReference type="ChEBI" id="CHEBI:59789"/>
    </ligand>
</feature>
<protein>
    <recommendedName>
        <fullName evidence="1">Ribosomal RNA small subunit methyltransferase G</fullName>
        <ecNumber evidence="1">2.1.1.170</ecNumber>
    </recommendedName>
    <alternativeName>
        <fullName evidence="1">16S rRNA 7-methylguanosine methyltransferase</fullName>
        <shortName evidence="1">16S rRNA m7G methyltransferase</shortName>
    </alternativeName>
</protein>